<dbReference type="EMBL" id="BA000022">
    <property type="protein sequence ID" value="BAA17291.1"/>
    <property type="molecule type" value="Genomic_DNA"/>
</dbReference>
<dbReference type="PIR" id="S77444">
    <property type="entry name" value="S77444"/>
</dbReference>
<dbReference type="SMR" id="P73263"/>
<dbReference type="IntAct" id="P73263">
    <property type="interactions" value="19"/>
</dbReference>
<dbReference type="STRING" id="1148.gene:10498154"/>
<dbReference type="PaxDb" id="1148-1652369"/>
<dbReference type="EnsemblBacteria" id="BAA17291">
    <property type="protein sequence ID" value="BAA17291"/>
    <property type="gene ID" value="BAA17291"/>
</dbReference>
<dbReference type="KEGG" id="syn:slr1139"/>
<dbReference type="eggNOG" id="COG3118">
    <property type="taxonomic scope" value="Bacteria"/>
</dbReference>
<dbReference type="InParanoid" id="P73263"/>
<dbReference type="PhylomeDB" id="P73263"/>
<dbReference type="BRENDA" id="1.11.1.24">
    <property type="organism ID" value="6192"/>
</dbReference>
<dbReference type="Proteomes" id="UP000001425">
    <property type="component" value="Chromosome"/>
</dbReference>
<dbReference type="GO" id="GO:0005737">
    <property type="term" value="C:cytoplasm"/>
    <property type="evidence" value="ECO:0000318"/>
    <property type="project" value="GO_Central"/>
</dbReference>
<dbReference type="GO" id="GO:0005829">
    <property type="term" value="C:cytosol"/>
    <property type="evidence" value="ECO:0000318"/>
    <property type="project" value="GO_Central"/>
</dbReference>
<dbReference type="GO" id="GO:0015035">
    <property type="term" value="F:protein-disulfide reductase activity"/>
    <property type="evidence" value="ECO:0000318"/>
    <property type="project" value="GO_Central"/>
</dbReference>
<dbReference type="GO" id="GO:0045454">
    <property type="term" value="P:cell redox homeostasis"/>
    <property type="evidence" value="ECO:0000318"/>
    <property type="project" value="GO_Central"/>
</dbReference>
<dbReference type="CDD" id="cd02947">
    <property type="entry name" value="TRX_family"/>
    <property type="match status" value="1"/>
</dbReference>
<dbReference type="FunFam" id="3.40.30.10:FF:000001">
    <property type="entry name" value="Thioredoxin"/>
    <property type="match status" value="1"/>
</dbReference>
<dbReference type="Gene3D" id="3.40.30.10">
    <property type="entry name" value="Glutaredoxin"/>
    <property type="match status" value="1"/>
</dbReference>
<dbReference type="InterPro" id="IPR005746">
    <property type="entry name" value="Thioredoxin"/>
</dbReference>
<dbReference type="InterPro" id="IPR036249">
    <property type="entry name" value="Thioredoxin-like_sf"/>
</dbReference>
<dbReference type="InterPro" id="IPR017937">
    <property type="entry name" value="Thioredoxin_CS"/>
</dbReference>
<dbReference type="InterPro" id="IPR013766">
    <property type="entry name" value="Thioredoxin_domain"/>
</dbReference>
<dbReference type="PANTHER" id="PTHR45663">
    <property type="entry name" value="GEO12009P1"/>
    <property type="match status" value="1"/>
</dbReference>
<dbReference type="PANTHER" id="PTHR45663:SF11">
    <property type="entry name" value="GEO12009P1"/>
    <property type="match status" value="1"/>
</dbReference>
<dbReference type="Pfam" id="PF00085">
    <property type="entry name" value="Thioredoxin"/>
    <property type="match status" value="1"/>
</dbReference>
<dbReference type="PIRSF" id="PIRSF000077">
    <property type="entry name" value="Thioredoxin"/>
    <property type="match status" value="1"/>
</dbReference>
<dbReference type="PRINTS" id="PR00421">
    <property type="entry name" value="THIOREDOXIN"/>
</dbReference>
<dbReference type="SUPFAM" id="SSF52833">
    <property type="entry name" value="Thioredoxin-like"/>
    <property type="match status" value="1"/>
</dbReference>
<dbReference type="PROSITE" id="PS00194">
    <property type="entry name" value="THIOREDOXIN_1"/>
    <property type="match status" value="1"/>
</dbReference>
<dbReference type="PROSITE" id="PS51352">
    <property type="entry name" value="THIOREDOXIN_2"/>
    <property type="match status" value="1"/>
</dbReference>
<proteinExistence type="evidence at protein level"/>
<evidence type="ECO:0000255" key="1">
    <source>
        <dbReference type="PROSITE-ProRule" id="PRU00691"/>
    </source>
</evidence>
<evidence type="ECO:0000269" key="2">
    <source>
    </source>
</evidence>
<evidence type="ECO:0000305" key="3"/>
<organism>
    <name type="scientific">Synechocystis sp. (strain ATCC 27184 / PCC 6803 / Kazusa)</name>
    <dbReference type="NCBI Taxonomy" id="1111708"/>
    <lineage>
        <taxon>Bacteria</taxon>
        <taxon>Bacillati</taxon>
        <taxon>Cyanobacteriota</taxon>
        <taxon>Cyanophyceae</taxon>
        <taxon>Synechococcales</taxon>
        <taxon>Merismopediaceae</taxon>
        <taxon>Synechocystis</taxon>
    </lineage>
</organism>
<feature type="initiator methionine" description="Removed" evidence="2">
    <location>
        <position position="1"/>
    </location>
</feature>
<feature type="chain" id="PRO_0000120140" description="Thioredoxin-like protein slr1139">
    <location>
        <begin position="2"/>
        <end position="109"/>
    </location>
</feature>
<feature type="domain" description="Thioredoxin" evidence="1">
    <location>
        <begin position="2"/>
        <end position="107"/>
    </location>
</feature>
<feature type="disulfide bond" description="Redox-active" evidence="1">
    <location>
        <begin position="31"/>
        <end position="34"/>
    </location>
</feature>
<name>THIO2_SYNY3</name>
<sequence>MSLLEITDAEFEQETQGQTKPVLVYFWASWCGPCRLMAPAIQAIAKDYGDKLKVLKLEVDPNPAAVAQCKVEGVPALRLFKNNELVMTHEGAIAKPKLLELLKEELDFI</sequence>
<gene>
    <name type="ordered locus">slr1139</name>
</gene>
<keyword id="KW-0903">Direct protein sequencing</keyword>
<keyword id="KW-1015">Disulfide bond</keyword>
<keyword id="KW-0249">Electron transport</keyword>
<keyword id="KW-0676">Redox-active center</keyword>
<keyword id="KW-1185">Reference proteome</keyword>
<keyword id="KW-0813">Transport</keyword>
<protein>
    <recommendedName>
        <fullName>Thioredoxin-like protein slr1139</fullName>
    </recommendedName>
</protein>
<comment type="interaction">
    <interactant intactId="EBI-862065">
        <id>P73263</id>
    </interactant>
    <interactant intactId="EBI-862771">
        <id>P73728</id>
        <label>sll1621</label>
    </interactant>
    <organismsDiffer>false</organismsDiffer>
    <experiments>4</experiments>
</comment>
<comment type="interaction">
    <interactant intactId="EBI-862065">
        <id>P73263</id>
    </interactant>
    <interactant intactId="EBI-862753">
        <id>P73348</id>
        <label>slr1198</label>
    </interactant>
    <organismsDiffer>false</organismsDiffer>
    <experiments>2</experiments>
</comment>
<comment type="similarity">
    <text evidence="3">Belongs to the thioredoxin family.</text>
</comment>
<reference key="1">
    <citation type="journal article" date="1996" name="DNA Res.">
        <title>Sequence analysis of the genome of the unicellular cyanobacterium Synechocystis sp. strain PCC6803. II. Sequence determination of the entire genome and assignment of potential protein-coding regions.</title>
        <authorList>
            <person name="Kaneko T."/>
            <person name="Sato S."/>
            <person name="Kotani H."/>
            <person name="Tanaka A."/>
            <person name="Asamizu E."/>
            <person name="Nakamura Y."/>
            <person name="Miyajima N."/>
            <person name="Hirosawa M."/>
            <person name="Sugiura M."/>
            <person name="Sasamoto S."/>
            <person name="Kimura T."/>
            <person name="Hosouchi T."/>
            <person name="Matsuno A."/>
            <person name="Muraki A."/>
            <person name="Nakazaki N."/>
            <person name="Naruo K."/>
            <person name="Okumura S."/>
            <person name="Shimpo S."/>
            <person name="Takeuchi C."/>
            <person name="Wada T."/>
            <person name="Watanabe A."/>
            <person name="Yamada M."/>
            <person name="Yasuda M."/>
            <person name="Tabata S."/>
        </authorList>
    </citation>
    <scope>NUCLEOTIDE SEQUENCE [LARGE SCALE GENOMIC DNA]</scope>
    <source>
        <strain>ATCC 27184 / PCC 6803 / Kazusa</strain>
    </source>
</reference>
<reference key="2">
    <citation type="journal article" date="1997" name="Electrophoresis">
        <title>Towards a proteome project of cyanobacterium Synechocystis sp. strain PCC6803: linking 130 protein spots with their respective genes.</title>
        <authorList>
            <person name="Sazuka T."/>
            <person name="Ohara O."/>
        </authorList>
    </citation>
    <scope>PROTEIN SEQUENCE OF 2-19</scope>
</reference>
<accession>P73263</accession>